<protein>
    <recommendedName>
        <fullName evidence="1">5'-nucleotidase SurE</fullName>
        <ecNumber evidence="1">3.1.3.5</ecNumber>
    </recommendedName>
    <alternativeName>
        <fullName evidence="1">Nucleoside 5'-monophosphate phosphohydrolase</fullName>
    </alternativeName>
</protein>
<gene>
    <name evidence="1" type="primary">surE</name>
    <name type="ordered locus">PFLU_1299</name>
</gene>
<proteinExistence type="inferred from homology"/>
<feature type="chain" id="PRO_1000202371" description="5'-nucleotidase SurE">
    <location>
        <begin position="1"/>
        <end position="249"/>
    </location>
</feature>
<feature type="binding site" evidence="1">
    <location>
        <position position="8"/>
    </location>
    <ligand>
        <name>a divalent metal cation</name>
        <dbReference type="ChEBI" id="CHEBI:60240"/>
    </ligand>
</feature>
<feature type="binding site" evidence="1">
    <location>
        <position position="9"/>
    </location>
    <ligand>
        <name>a divalent metal cation</name>
        <dbReference type="ChEBI" id="CHEBI:60240"/>
    </ligand>
</feature>
<feature type="binding site" evidence="1">
    <location>
        <position position="39"/>
    </location>
    <ligand>
        <name>a divalent metal cation</name>
        <dbReference type="ChEBI" id="CHEBI:60240"/>
    </ligand>
</feature>
<feature type="binding site" evidence="1">
    <location>
        <position position="91"/>
    </location>
    <ligand>
        <name>a divalent metal cation</name>
        <dbReference type="ChEBI" id="CHEBI:60240"/>
    </ligand>
</feature>
<reference key="1">
    <citation type="journal article" date="2009" name="Genome Biol.">
        <title>Genomic and genetic analyses of diversity and plant interactions of Pseudomonas fluorescens.</title>
        <authorList>
            <person name="Silby M.W."/>
            <person name="Cerdeno-Tarraga A.M."/>
            <person name="Vernikos G.S."/>
            <person name="Giddens S.R."/>
            <person name="Jackson R.W."/>
            <person name="Preston G.M."/>
            <person name="Zhang X.-X."/>
            <person name="Moon C.D."/>
            <person name="Gehrig S.M."/>
            <person name="Godfrey S.A.C."/>
            <person name="Knight C.G."/>
            <person name="Malone J.G."/>
            <person name="Robinson Z."/>
            <person name="Spiers A.J."/>
            <person name="Harris S."/>
            <person name="Challis G.L."/>
            <person name="Yaxley A.M."/>
            <person name="Harris D."/>
            <person name="Seeger K."/>
            <person name="Murphy L."/>
            <person name="Rutter S."/>
            <person name="Squares R."/>
            <person name="Quail M.A."/>
            <person name="Saunders E."/>
            <person name="Mavromatis K."/>
            <person name="Brettin T.S."/>
            <person name="Bentley S.D."/>
            <person name="Hothersall J."/>
            <person name="Stephens E."/>
            <person name="Thomas C.M."/>
            <person name="Parkhill J."/>
            <person name="Levy S.B."/>
            <person name="Rainey P.B."/>
            <person name="Thomson N.R."/>
        </authorList>
    </citation>
    <scope>NUCLEOTIDE SEQUENCE [LARGE SCALE GENOMIC DNA]</scope>
    <source>
        <strain>SBW25</strain>
    </source>
</reference>
<dbReference type="EC" id="3.1.3.5" evidence="1"/>
<dbReference type="EMBL" id="AM181176">
    <property type="protein sequence ID" value="CAY47555.1"/>
    <property type="molecule type" value="Genomic_DNA"/>
</dbReference>
<dbReference type="RefSeq" id="WP_012722616.1">
    <property type="nucleotide sequence ID" value="NC_012660.1"/>
</dbReference>
<dbReference type="SMR" id="C3K705"/>
<dbReference type="STRING" id="294.SRM1_01157"/>
<dbReference type="GeneID" id="93462915"/>
<dbReference type="PATRIC" id="fig|216595.4.peg.1530"/>
<dbReference type="eggNOG" id="COG0496">
    <property type="taxonomic scope" value="Bacteria"/>
</dbReference>
<dbReference type="HOGENOM" id="CLU_045192_1_2_6"/>
<dbReference type="OrthoDB" id="9780815at2"/>
<dbReference type="GO" id="GO:0005737">
    <property type="term" value="C:cytoplasm"/>
    <property type="evidence" value="ECO:0007669"/>
    <property type="project" value="UniProtKB-SubCell"/>
</dbReference>
<dbReference type="GO" id="GO:0008254">
    <property type="term" value="F:3'-nucleotidase activity"/>
    <property type="evidence" value="ECO:0007669"/>
    <property type="project" value="TreeGrafter"/>
</dbReference>
<dbReference type="GO" id="GO:0008253">
    <property type="term" value="F:5'-nucleotidase activity"/>
    <property type="evidence" value="ECO:0007669"/>
    <property type="project" value="UniProtKB-UniRule"/>
</dbReference>
<dbReference type="GO" id="GO:0004309">
    <property type="term" value="F:exopolyphosphatase activity"/>
    <property type="evidence" value="ECO:0007669"/>
    <property type="project" value="TreeGrafter"/>
</dbReference>
<dbReference type="GO" id="GO:0046872">
    <property type="term" value="F:metal ion binding"/>
    <property type="evidence" value="ECO:0007669"/>
    <property type="project" value="UniProtKB-UniRule"/>
</dbReference>
<dbReference type="GO" id="GO:0000166">
    <property type="term" value="F:nucleotide binding"/>
    <property type="evidence" value="ECO:0007669"/>
    <property type="project" value="UniProtKB-KW"/>
</dbReference>
<dbReference type="FunFam" id="3.40.1210.10:FF:000001">
    <property type="entry name" value="5'/3'-nucleotidase SurE"/>
    <property type="match status" value="1"/>
</dbReference>
<dbReference type="Gene3D" id="3.40.1210.10">
    <property type="entry name" value="Survival protein SurE-like phosphatase/nucleotidase"/>
    <property type="match status" value="1"/>
</dbReference>
<dbReference type="HAMAP" id="MF_00060">
    <property type="entry name" value="SurE"/>
    <property type="match status" value="1"/>
</dbReference>
<dbReference type="InterPro" id="IPR030048">
    <property type="entry name" value="SurE"/>
</dbReference>
<dbReference type="InterPro" id="IPR002828">
    <property type="entry name" value="SurE-like_Pase/nucleotidase"/>
</dbReference>
<dbReference type="InterPro" id="IPR036523">
    <property type="entry name" value="SurE-like_sf"/>
</dbReference>
<dbReference type="NCBIfam" id="NF001489">
    <property type="entry name" value="PRK00346.1-3"/>
    <property type="match status" value="1"/>
</dbReference>
<dbReference type="NCBIfam" id="NF001490">
    <property type="entry name" value="PRK00346.1-4"/>
    <property type="match status" value="1"/>
</dbReference>
<dbReference type="NCBIfam" id="TIGR00087">
    <property type="entry name" value="surE"/>
    <property type="match status" value="1"/>
</dbReference>
<dbReference type="PANTHER" id="PTHR30457">
    <property type="entry name" value="5'-NUCLEOTIDASE SURE"/>
    <property type="match status" value="1"/>
</dbReference>
<dbReference type="PANTHER" id="PTHR30457:SF12">
    <property type="entry name" value="5'_3'-NUCLEOTIDASE SURE"/>
    <property type="match status" value="1"/>
</dbReference>
<dbReference type="Pfam" id="PF01975">
    <property type="entry name" value="SurE"/>
    <property type="match status" value="1"/>
</dbReference>
<dbReference type="SUPFAM" id="SSF64167">
    <property type="entry name" value="SurE-like"/>
    <property type="match status" value="1"/>
</dbReference>
<sequence>MRILISNDDGATAPGLAALYAALEDYAECVVVAPDQDKSGASSSLTLDRPLHPKVLANGFISVNGTPTDCVHLAINSLLDHEPDLVVSGINLGANLGDDVLYSGTVAAALEGRFLGRTAFAFSFASRQLDNLPTAAYFARKLVEAHATLDLPPRTVLNVNIPNLPLDHIRGIQLTRLGHRARAAAPLKVVDPRGKEGYWIAAAGDAEDGGEGTDFHAVMQGYVSITPLQFDRTFSDAFSGLDGWLEGLR</sequence>
<name>SURE_PSEFS</name>
<organism>
    <name type="scientific">Pseudomonas fluorescens (strain SBW25)</name>
    <dbReference type="NCBI Taxonomy" id="216595"/>
    <lineage>
        <taxon>Bacteria</taxon>
        <taxon>Pseudomonadati</taxon>
        <taxon>Pseudomonadota</taxon>
        <taxon>Gammaproteobacteria</taxon>
        <taxon>Pseudomonadales</taxon>
        <taxon>Pseudomonadaceae</taxon>
        <taxon>Pseudomonas</taxon>
    </lineage>
</organism>
<accession>C3K705</accession>
<evidence type="ECO:0000255" key="1">
    <source>
        <dbReference type="HAMAP-Rule" id="MF_00060"/>
    </source>
</evidence>
<keyword id="KW-0963">Cytoplasm</keyword>
<keyword id="KW-0378">Hydrolase</keyword>
<keyword id="KW-0479">Metal-binding</keyword>
<keyword id="KW-0547">Nucleotide-binding</keyword>
<comment type="function">
    <text evidence="1">Nucleotidase that shows phosphatase activity on nucleoside 5'-monophosphates.</text>
</comment>
<comment type="catalytic activity">
    <reaction evidence="1">
        <text>a ribonucleoside 5'-phosphate + H2O = a ribonucleoside + phosphate</text>
        <dbReference type="Rhea" id="RHEA:12484"/>
        <dbReference type="ChEBI" id="CHEBI:15377"/>
        <dbReference type="ChEBI" id="CHEBI:18254"/>
        <dbReference type="ChEBI" id="CHEBI:43474"/>
        <dbReference type="ChEBI" id="CHEBI:58043"/>
        <dbReference type="EC" id="3.1.3.5"/>
    </reaction>
</comment>
<comment type="cofactor">
    <cofactor evidence="1">
        <name>a divalent metal cation</name>
        <dbReference type="ChEBI" id="CHEBI:60240"/>
    </cofactor>
    <text evidence="1">Binds 1 divalent metal cation per subunit.</text>
</comment>
<comment type="subcellular location">
    <subcellularLocation>
        <location evidence="1">Cytoplasm</location>
    </subcellularLocation>
</comment>
<comment type="similarity">
    <text evidence="1">Belongs to the SurE nucleotidase family.</text>
</comment>